<name>TRUA_STRGG</name>
<sequence>MSDQAEPGFVRVRLDLSYDGKDFSGWAKQTSRRTVQGEIEDALRTVTRSSVTYDLTVAGRTDAGVHARGQVAHVDLPEAVWAEHEEKLLRRLAGRLPLDVRIWRAAPAPAGFNARFSALWRRYAYRVGDRPGGVDPLTRGHVLWHDRPLDLDAMNEAAALMVGEHDFAAYCKKREGATTIRTLQKLRWVRDPATGVLTATVQADAFCHNMVRALIGAALFVGDGRRPAAWPAEVLAAKVRDPGVHVVRPHGLTLEEVAYPADALLAARAAEARNVRTLPGAGCC</sequence>
<protein>
    <recommendedName>
        <fullName evidence="1">tRNA pseudouridine synthase A</fullName>
        <ecNumber evidence="1">5.4.99.12</ecNumber>
    </recommendedName>
    <alternativeName>
        <fullName evidence="1">tRNA pseudouridine(38-40) synthase</fullName>
    </alternativeName>
    <alternativeName>
        <fullName evidence="1">tRNA pseudouridylate synthase I</fullName>
    </alternativeName>
    <alternativeName>
        <fullName evidence="1">tRNA-uridine isomerase I</fullName>
    </alternativeName>
</protein>
<proteinExistence type="inferred from homology"/>
<evidence type="ECO:0000255" key="1">
    <source>
        <dbReference type="HAMAP-Rule" id="MF_00171"/>
    </source>
</evidence>
<feature type="chain" id="PRO_1000097788" description="tRNA pseudouridine synthase A">
    <location>
        <begin position="1"/>
        <end position="284"/>
    </location>
</feature>
<feature type="active site" description="Nucleophile" evidence="1">
    <location>
        <position position="62"/>
    </location>
</feature>
<feature type="binding site" evidence="1">
    <location>
        <position position="123"/>
    </location>
    <ligand>
        <name>substrate</name>
    </ligand>
</feature>
<keyword id="KW-0413">Isomerase</keyword>
<keyword id="KW-0819">tRNA processing</keyword>
<reference key="1">
    <citation type="journal article" date="2008" name="J. Bacteriol.">
        <title>Genome sequence of the streptomycin-producing microorganism Streptomyces griseus IFO 13350.</title>
        <authorList>
            <person name="Ohnishi Y."/>
            <person name="Ishikawa J."/>
            <person name="Hara H."/>
            <person name="Suzuki H."/>
            <person name="Ikenoya M."/>
            <person name="Ikeda H."/>
            <person name="Yamashita A."/>
            <person name="Hattori M."/>
            <person name="Horinouchi S."/>
        </authorList>
    </citation>
    <scope>NUCLEOTIDE SEQUENCE [LARGE SCALE GENOMIC DNA]</scope>
    <source>
        <strain>JCM 4626 / CBS 651.72 / NBRC 13350 / KCC S-0626 / ISP 5235</strain>
    </source>
</reference>
<comment type="function">
    <text evidence="1">Formation of pseudouridine at positions 38, 39 and 40 in the anticodon stem and loop of transfer RNAs.</text>
</comment>
<comment type="catalytic activity">
    <reaction evidence="1">
        <text>uridine(38/39/40) in tRNA = pseudouridine(38/39/40) in tRNA</text>
        <dbReference type="Rhea" id="RHEA:22376"/>
        <dbReference type="Rhea" id="RHEA-COMP:10085"/>
        <dbReference type="Rhea" id="RHEA-COMP:10087"/>
        <dbReference type="ChEBI" id="CHEBI:65314"/>
        <dbReference type="ChEBI" id="CHEBI:65315"/>
        <dbReference type="EC" id="5.4.99.12"/>
    </reaction>
</comment>
<comment type="subunit">
    <text evidence="1">Homodimer.</text>
</comment>
<comment type="similarity">
    <text evidence="1">Belongs to the tRNA pseudouridine synthase TruA family.</text>
</comment>
<gene>
    <name evidence="1" type="primary">truA</name>
    <name type="ordered locus">SGR_2805</name>
</gene>
<dbReference type="EC" id="5.4.99.12" evidence="1"/>
<dbReference type="EMBL" id="AP009493">
    <property type="protein sequence ID" value="BAG19634.1"/>
    <property type="molecule type" value="Genomic_DNA"/>
</dbReference>
<dbReference type="RefSeq" id="WP_012379458.1">
    <property type="nucleotide sequence ID" value="NC_010572.1"/>
</dbReference>
<dbReference type="SMR" id="B1W3X8"/>
<dbReference type="KEGG" id="sgr:SGR_2805"/>
<dbReference type="PATRIC" id="fig|455632.4.peg.2867"/>
<dbReference type="eggNOG" id="COG0101">
    <property type="taxonomic scope" value="Bacteria"/>
</dbReference>
<dbReference type="HOGENOM" id="CLU_014673_0_2_11"/>
<dbReference type="Proteomes" id="UP000001685">
    <property type="component" value="Chromosome"/>
</dbReference>
<dbReference type="GO" id="GO:0003723">
    <property type="term" value="F:RNA binding"/>
    <property type="evidence" value="ECO:0007669"/>
    <property type="project" value="InterPro"/>
</dbReference>
<dbReference type="GO" id="GO:0160147">
    <property type="term" value="F:tRNA pseudouridine(38-40) synthase activity"/>
    <property type="evidence" value="ECO:0007669"/>
    <property type="project" value="UniProtKB-EC"/>
</dbReference>
<dbReference type="GO" id="GO:0031119">
    <property type="term" value="P:tRNA pseudouridine synthesis"/>
    <property type="evidence" value="ECO:0007669"/>
    <property type="project" value="UniProtKB-UniRule"/>
</dbReference>
<dbReference type="CDD" id="cd02570">
    <property type="entry name" value="PseudoU_synth_EcTruA"/>
    <property type="match status" value="1"/>
</dbReference>
<dbReference type="FunFam" id="3.30.70.580:FF:000008">
    <property type="entry name" value="tRNA pseudouridine synthase A"/>
    <property type="match status" value="1"/>
</dbReference>
<dbReference type="FunFam" id="3.30.70.660:FF:000003">
    <property type="entry name" value="tRNA pseudouridine synthase A"/>
    <property type="match status" value="1"/>
</dbReference>
<dbReference type="Gene3D" id="3.30.70.660">
    <property type="entry name" value="Pseudouridine synthase I, catalytic domain, C-terminal subdomain"/>
    <property type="match status" value="1"/>
</dbReference>
<dbReference type="Gene3D" id="3.30.70.580">
    <property type="entry name" value="Pseudouridine synthase I, catalytic domain, N-terminal subdomain"/>
    <property type="match status" value="1"/>
</dbReference>
<dbReference type="HAMAP" id="MF_00171">
    <property type="entry name" value="TruA"/>
    <property type="match status" value="1"/>
</dbReference>
<dbReference type="InterPro" id="IPR020103">
    <property type="entry name" value="PsdUridine_synth_cat_dom_sf"/>
</dbReference>
<dbReference type="InterPro" id="IPR001406">
    <property type="entry name" value="PsdUridine_synth_TruA"/>
</dbReference>
<dbReference type="InterPro" id="IPR020097">
    <property type="entry name" value="PsdUridine_synth_TruA_a/b_dom"/>
</dbReference>
<dbReference type="InterPro" id="IPR020095">
    <property type="entry name" value="PsdUridine_synth_TruA_C"/>
</dbReference>
<dbReference type="InterPro" id="IPR020094">
    <property type="entry name" value="TruA/RsuA/RluB/E/F_N"/>
</dbReference>
<dbReference type="NCBIfam" id="TIGR00071">
    <property type="entry name" value="hisT_truA"/>
    <property type="match status" value="1"/>
</dbReference>
<dbReference type="PANTHER" id="PTHR11142">
    <property type="entry name" value="PSEUDOURIDYLATE SYNTHASE"/>
    <property type="match status" value="1"/>
</dbReference>
<dbReference type="PANTHER" id="PTHR11142:SF0">
    <property type="entry name" value="TRNA PSEUDOURIDINE SYNTHASE-LIKE 1"/>
    <property type="match status" value="1"/>
</dbReference>
<dbReference type="Pfam" id="PF01416">
    <property type="entry name" value="PseudoU_synth_1"/>
    <property type="match status" value="2"/>
</dbReference>
<dbReference type="PIRSF" id="PIRSF001430">
    <property type="entry name" value="tRNA_psdUrid_synth"/>
    <property type="match status" value="1"/>
</dbReference>
<dbReference type="SUPFAM" id="SSF55120">
    <property type="entry name" value="Pseudouridine synthase"/>
    <property type="match status" value="1"/>
</dbReference>
<accession>B1W3X8</accession>
<organism>
    <name type="scientific">Streptomyces griseus subsp. griseus (strain JCM 4626 / CBS 651.72 / NBRC 13350 / KCC S-0626 / ISP 5235)</name>
    <dbReference type="NCBI Taxonomy" id="455632"/>
    <lineage>
        <taxon>Bacteria</taxon>
        <taxon>Bacillati</taxon>
        <taxon>Actinomycetota</taxon>
        <taxon>Actinomycetes</taxon>
        <taxon>Kitasatosporales</taxon>
        <taxon>Streptomycetaceae</taxon>
        <taxon>Streptomyces</taxon>
    </lineage>
</organism>